<protein>
    <recommendedName>
        <fullName evidence="6">NALCN channel auxiliary factor 2</fullName>
    </recommendedName>
    <alternativeName>
        <fullName>Protein TED</fullName>
    </alternativeName>
    <alternativeName>
        <fullName>Transmembrane protein 28</fullName>
    </alternativeName>
    <alternativeName>
        <fullName>Transmembrane protein FAM155B</fullName>
    </alternativeName>
</protein>
<evidence type="ECO:0000255" key="1"/>
<evidence type="ECO:0000256" key="2">
    <source>
        <dbReference type="SAM" id="MobiDB-lite"/>
    </source>
</evidence>
<evidence type="ECO:0000269" key="3">
    <source ref="1"/>
</evidence>
<evidence type="ECO:0000305" key="4"/>
<evidence type="ECO:0000305" key="5">
    <source>
    </source>
</evidence>
<evidence type="ECO:0000312" key="6">
    <source>
        <dbReference type="HGNC" id="HGNC:30701"/>
    </source>
</evidence>
<organism>
    <name type="scientific">Homo sapiens</name>
    <name type="common">Human</name>
    <dbReference type="NCBI Taxonomy" id="9606"/>
    <lineage>
        <taxon>Eukaryota</taxon>
        <taxon>Metazoa</taxon>
        <taxon>Chordata</taxon>
        <taxon>Craniata</taxon>
        <taxon>Vertebrata</taxon>
        <taxon>Euteleostomi</taxon>
        <taxon>Mammalia</taxon>
        <taxon>Eutheria</taxon>
        <taxon>Euarchontoglires</taxon>
        <taxon>Primates</taxon>
        <taxon>Haplorrhini</taxon>
        <taxon>Catarrhini</taxon>
        <taxon>Hominidae</taxon>
        <taxon>Homo</taxon>
    </lineage>
</organism>
<reference key="1">
    <citation type="submission" date="1998-08" db="EMBL/GenBank/DDBJ databases">
        <title>Isolation and characterization of a human X-linked gene mapping to the Xq13.1 region.</title>
        <authorList>
            <person name="Zonana J."/>
            <person name="Gault J."/>
        </authorList>
    </citation>
    <scope>NUCLEOTIDE SEQUENCE [MRNA]</scope>
    <scope>VARIANT PRO-172</scope>
</reference>
<reference key="2">
    <citation type="journal article" date="2005" name="Nature">
        <title>The DNA sequence of the human X chromosome.</title>
        <authorList>
            <person name="Ross M.T."/>
            <person name="Grafham D.V."/>
            <person name="Coffey A.J."/>
            <person name="Scherer S."/>
            <person name="McLay K."/>
            <person name="Muzny D."/>
            <person name="Platzer M."/>
            <person name="Howell G.R."/>
            <person name="Burrows C."/>
            <person name="Bird C.P."/>
            <person name="Frankish A."/>
            <person name="Lovell F.L."/>
            <person name="Howe K.L."/>
            <person name="Ashurst J.L."/>
            <person name="Fulton R.S."/>
            <person name="Sudbrak R."/>
            <person name="Wen G."/>
            <person name="Jones M.C."/>
            <person name="Hurles M.E."/>
            <person name="Andrews T.D."/>
            <person name="Scott C.E."/>
            <person name="Searle S."/>
            <person name="Ramser J."/>
            <person name="Whittaker A."/>
            <person name="Deadman R."/>
            <person name="Carter N.P."/>
            <person name="Hunt S.E."/>
            <person name="Chen R."/>
            <person name="Cree A."/>
            <person name="Gunaratne P."/>
            <person name="Havlak P."/>
            <person name="Hodgson A."/>
            <person name="Metzker M.L."/>
            <person name="Richards S."/>
            <person name="Scott G."/>
            <person name="Steffen D."/>
            <person name="Sodergren E."/>
            <person name="Wheeler D.A."/>
            <person name="Worley K.C."/>
            <person name="Ainscough R."/>
            <person name="Ambrose K.D."/>
            <person name="Ansari-Lari M.A."/>
            <person name="Aradhya S."/>
            <person name="Ashwell R.I."/>
            <person name="Babbage A.K."/>
            <person name="Bagguley C.L."/>
            <person name="Ballabio A."/>
            <person name="Banerjee R."/>
            <person name="Barker G.E."/>
            <person name="Barlow K.F."/>
            <person name="Barrett I.P."/>
            <person name="Bates K.N."/>
            <person name="Beare D.M."/>
            <person name="Beasley H."/>
            <person name="Beasley O."/>
            <person name="Beck A."/>
            <person name="Bethel G."/>
            <person name="Blechschmidt K."/>
            <person name="Brady N."/>
            <person name="Bray-Allen S."/>
            <person name="Bridgeman A.M."/>
            <person name="Brown A.J."/>
            <person name="Brown M.J."/>
            <person name="Bonnin D."/>
            <person name="Bruford E.A."/>
            <person name="Buhay C."/>
            <person name="Burch P."/>
            <person name="Burford D."/>
            <person name="Burgess J."/>
            <person name="Burrill W."/>
            <person name="Burton J."/>
            <person name="Bye J.M."/>
            <person name="Carder C."/>
            <person name="Carrel L."/>
            <person name="Chako J."/>
            <person name="Chapman J.C."/>
            <person name="Chavez D."/>
            <person name="Chen E."/>
            <person name="Chen G."/>
            <person name="Chen Y."/>
            <person name="Chen Z."/>
            <person name="Chinault C."/>
            <person name="Ciccodicola A."/>
            <person name="Clark S.Y."/>
            <person name="Clarke G."/>
            <person name="Clee C.M."/>
            <person name="Clegg S."/>
            <person name="Clerc-Blankenburg K."/>
            <person name="Clifford K."/>
            <person name="Cobley V."/>
            <person name="Cole C.G."/>
            <person name="Conquer J.S."/>
            <person name="Corby N."/>
            <person name="Connor R.E."/>
            <person name="David R."/>
            <person name="Davies J."/>
            <person name="Davis C."/>
            <person name="Davis J."/>
            <person name="Delgado O."/>
            <person name="Deshazo D."/>
            <person name="Dhami P."/>
            <person name="Ding Y."/>
            <person name="Dinh H."/>
            <person name="Dodsworth S."/>
            <person name="Draper H."/>
            <person name="Dugan-Rocha S."/>
            <person name="Dunham A."/>
            <person name="Dunn M."/>
            <person name="Durbin K.J."/>
            <person name="Dutta I."/>
            <person name="Eades T."/>
            <person name="Ellwood M."/>
            <person name="Emery-Cohen A."/>
            <person name="Errington H."/>
            <person name="Evans K.L."/>
            <person name="Faulkner L."/>
            <person name="Francis F."/>
            <person name="Frankland J."/>
            <person name="Fraser A.E."/>
            <person name="Galgoczy P."/>
            <person name="Gilbert J."/>
            <person name="Gill R."/>
            <person name="Gloeckner G."/>
            <person name="Gregory S.G."/>
            <person name="Gribble S."/>
            <person name="Griffiths C."/>
            <person name="Grocock R."/>
            <person name="Gu Y."/>
            <person name="Gwilliam R."/>
            <person name="Hamilton C."/>
            <person name="Hart E.A."/>
            <person name="Hawes A."/>
            <person name="Heath P.D."/>
            <person name="Heitmann K."/>
            <person name="Hennig S."/>
            <person name="Hernandez J."/>
            <person name="Hinzmann B."/>
            <person name="Ho S."/>
            <person name="Hoffs M."/>
            <person name="Howden P.J."/>
            <person name="Huckle E.J."/>
            <person name="Hume J."/>
            <person name="Hunt P.J."/>
            <person name="Hunt A.R."/>
            <person name="Isherwood J."/>
            <person name="Jacob L."/>
            <person name="Johnson D."/>
            <person name="Jones S."/>
            <person name="de Jong P.J."/>
            <person name="Joseph S.S."/>
            <person name="Keenan S."/>
            <person name="Kelly S."/>
            <person name="Kershaw J.K."/>
            <person name="Khan Z."/>
            <person name="Kioschis P."/>
            <person name="Klages S."/>
            <person name="Knights A.J."/>
            <person name="Kosiura A."/>
            <person name="Kovar-Smith C."/>
            <person name="Laird G.K."/>
            <person name="Langford C."/>
            <person name="Lawlor S."/>
            <person name="Leversha M."/>
            <person name="Lewis L."/>
            <person name="Liu W."/>
            <person name="Lloyd C."/>
            <person name="Lloyd D.M."/>
            <person name="Loulseged H."/>
            <person name="Loveland J.E."/>
            <person name="Lovell J.D."/>
            <person name="Lozado R."/>
            <person name="Lu J."/>
            <person name="Lyne R."/>
            <person name="Ma J."/>
            <person name="Maheshwari M."/>
            <person name="Matthews L.H."/>
            <person name="McDowall J."/>
            <person name="McLaren S."/>
            <person name="McMurray A."/>
            <person name="Meidl P."/>
            <person name="Meitinger T."/>
            <person name="Milne S."/>
            <person name="Miner G."/>
            <person name="Mistry S.L."/>
            <person name="Morgan M."/>
            <person name="Morris S."/>
            <person name="Mueller I."/>
            <person name="Mullikin J.C."/>
            <person name="Nguyen N."/>
            <person name="Nordsiek G."/>
            <person name="Nyakatura G."/>
            <person name="O'dell C.N."/>
            <person name="Okwuonu G."/>
            <person name="Palmer S."/>
            <person name="Pandian R."/>
            <person name="Parker D."/>
            <person name="Parrish J."/>
            <person name="Pasternak S."/>
            <person name="Patel D."/>
            <person name="Pearce A.V."/>
            <person name="Pearson D.M."/>
            <person name="Pelan S.E."/>
            <person name="Perez L."/>
            <person name="Porter K.M."/>
            <person name="Ramsey Y."/>
            <person name="Reichwald K."/>
            <person name="Rhodes S."/>
            <person name="Ridler K.A."/>
            <person name="Schlessinger D."/>
            <person name="Schueler M.G."/>
            <person name="Sehra H.K."/>
            <person name="Shaw-Smith C."/>
            <person name="Shen H."/>
            <person name="Sheridan E.M."/>
            <person name="Shownkeen R."/>
            <person name="Skuce C.D."/>
            <person name="Smith M.L."/>
            <person name="Sotheran E.C."/>
            <person name="Steingruber H.E."/>
            <person name="Steward C.A."/>
            <person name="Storey R."/>
            <person name="Swann R.M."/>
            <person name="Swarbreck D."/>
            <person name="Tabor P.E."/>
            <person name="Taudien S."/>
            <person name="Taylor T."/>
            <person name="Teague B."/>
            <person name="Thomas K."/>
            <person name="Thorpe A."/>
            <person name="Timms K."/>
            <person name="Tracey A."/>
            <person name="Trevanion S."/>
            <person name="Tromans A.C."/>
            <person name="d'Urso M."/>
            <person name="Verduzco D."/>
            <person name="Villasana D."/>
            <person name="Waldron L."/>
            <person name="Wall M."/>
            <person name="Wang Q."/>
            <person name="Warren J."/>
            <person name="Warry G.L."/>
            <person name="Wei X."/>
            <person name="West A."/>
            <person name="Whitehead S.L."/>
            <person name="Whiteley M.N."/>
            <person name="Wilkinson J.E."/>
            <person name="Willey D.L."/>
            <person name="Williams G."/>
            <person name="Williams L."/>
            <person name="Williamson A."/>
            <person name="Williamson H."/>
            <person name="Wilming L."/>
            <person name="Woodmansey R.L."/>
            <person name="Wray P.W."/>
            <person name="Yen J."/>
            <person name="Zhang J."/>
            <person name="Zhou J."/>
            <person name="Zoghbi H."/>
            <person name="Zorilla S."/>
            <person name="Buck D."/>
            <person name="Reinhardt R."/>
            <person name="Poustka A."/>
            <person name="Rosenthal A."/>
            <person name="Lehrach H."/>
            <person name="Meindl A."/>
            <person name="Minx P.J."/>
            <person name="Hillier L.W."/>
            <person name="Willard H.F."/>
            <person name="Wilson R.K."/>
            <person name="Waterston R.H."/>
            <person name="Rice C.M."/>
            <person name="Vaudin M."/>
            <person name="Coulson A."/>
            <person name="Nelson D.L."/>
            <person name="Weinstock G."/>
            <person name="Sulston J.E."/>
            <person name="Durbin R.M."/>
            <person name="Hubbard T."/>
            <person name="Gibbs R.A."/>
            <person name="Beck S."/>
            <person name="Rogers J."/>
            <person name="Bentley D.R."/>
        </authorList>
    </citation>
    <scope>NUCLEOTIDE SEQUENCE [LARGE SCALE GENOMIC DNA]</scope>
</reference>
<reference key="3">
    <citation type="submission" date="2005-09" db="EMBL/GenBank/DDBJ databases">
        <authorList>
            <person name="Mural R.J."/>
            <person name="Istrail S."/>
            <person name="Sutton G.G."/>
            <person name="Florea L."/>
            <person name="Halpern A.L."/>
            <person name="Mobarry C.M."/>
            <person name="Lippert R."/>
            <person name="Walenz B."/>
            <person name="Shatkay H."/>
            <person name="Dew I."/>
            <person name="Miller J.R."/>
            <person name="Flanigan M.J."/>
            <person name="Edwards N.J."/>
            <person name="Bolanos R."/>
            <person name="Fasulo D."/>
            <person name="Halldorsson B.V."/>
            <person name="Hannenhalli S."/>
            <person name="Turner R."/>
            <person name="Yooseph S."/>
            <person name="Lu F."/>
            <person name="Nusskern D.R."/>
            <person name="Shue B.C."/>
            <person name="Zheng X.H."/>
            <person name="Zhong F."/>
            <person name="Delcher A.L."/>
            <person name="Huson D.H."/>
            <person name="Kravitz S.A."/>
            <person name="Mouchard L."/>
            <person name="Reinert K."/>
            <person name="Remington K.A."/>
            <person name="Clark A.G."/>
            <person name="Waterman M.S."/>
            <person name="Eichler E.E."/>
            <person name="Adams M.D."/>
            <person name="Hunkapiller M.W."/>
            <person name="Myers E.W."/>
            <person name="Venter J.C."/>
        </authorList>
    </citation>
    <scope>NUCLEOTIDE SEQUENCE [LARGE SCALE GENOMIC DNA]</scope>
</reference>
<reference key="4">
    <citation type="journal article" date="2004" name="Genome Res.">
        <title>The status, quality, and expansion of the NIH full-length cDNA project: the Mammalian Gene Collection (MGC).</title>
        <authorList>
            <consortium name="The MGC Project Team"/>
        </authorList>
    </citation>
    <scope>NUCLEOTIDE SEQUENCE [LARGE SCALE MRNA]</scope>
</reference>
<reference key="5">
    <citation type="journal article" date="2020" name="Sci. Adv.">
        <title>The NALCN channel complex is voltage sensitive and directly modulated by extracellular calcium.</title>
        <authorList>
            <person name="Chua H.C."/>
            <person name="Wulf M."/>
            <person name="Weidling C."/>
            <person name="Rasmussen L.P."/>
            <person name="Pless S.A."/>
        </authorList>
    </citation>
    <scope>PROBABLE FUNCTION</scope>
</reference>
<sequence>MFRGAWMWPGKDAAALTICCCCCCWAPRPSDKPCADSERAQRWRLSLASLLFFTVLLADHLWLCAGARPRARELSSAMRPPWGAGRERQPVPPRAVLPLPPPPPGEPSAPPGTCGPRYSNLTKAAPAAGSRPVCGGVPEPTGLDAACTKLQSLQRLFEPTTPAPPLRPPDSLSRAPAEFPSAKKNLLKGHFRNFTLSFCDTYTVWDLLLGMDRPDSLDCSLDTLMGDLLAVVASPGSGAWEACSNCIEAYQRLDRHAQEKYDEFDLVLHKYLQAEEYSIRSCTKGCKAVYKAWLCSEYFSVTQQECQRWVPCKQYCLEVQTRCPFILPDNEEMVYGGLPGFICTGLLDTSPKRLETKCCDVQWVSCEAKKKKFKESEAPKTHQQQFHHSYFHHYHQQYHHYHPHHDPPGRVSNKPALLPVSGGSRLSPSRIRLCVLVLMLLHTVVSFSSNQGGGGLGLETLPALEEGLTREE</sequence>
<comment type="function">
    <text evidence="5">Probable component of the NALCN channel complex, a channel that regulates the resting membrane potential and controls neuronal excitability.</text>
</comment>
<comment type="subcellular location">
    <subcellularLocation>
        <location evidence="4">Membrane</location>
        <topology evidence="1">Multi-pass membrane protein</topology>
    </subcellularLocation>
</comment>
<comment type="similarity">
    <text evidence="4">Belongs to the NALF family.</text>
</comment>
<gene>
    <name evidence="6" type="primary">NALF2</name>
    <name type="synonym">FAM155B</name>
    <name type="synonym">TED</name>
    <name type="synonym">TMEM28</name>
</gene>
<proteinExistence type="evidence at protein level"/>
<feature type="chain" id="PRO_0000072598" description="NALCN channel auxiliary factor 2">
    <location>
        <begin position="1"/>
        <end position="472"/>
    </location>
</feature>
<feature type="transmembrane region" description="Helical" evidence="1">
    <location>
        <begin position="47"/>
        <end position="67"/>
    </location>
</feature>
<feature type="transmembrane region" description="Helical" evidence="1">
    <location>
        <begin position="433"/>
        <end position="453"/>
    </location>
</feature>
<feature type="region of interest" description="Disordered" evidence="2">
    <location>
        <begin position="77"/>
        <end position="114"/>
    </location>
</feature>
<feature type="compositionally biased region" description="Pro residues" evidence="2">
    <location>
        <begin position="90"/>
        <end position="110"/>
    </location>
</feature>
<feature type="glycosylation site" description="N-linked (GlcNAc...) asparagine" evidence="1">
    <location>
        <position position="120"/>
    </location>
</feature>
<feature type="glycosylation site" description="N-linked (GlcNAc...) asparagine" evidence="1">
    <location>
        <position position="193"/>
    </location>
</feature>
<feature type="sequence variant" id="VAR_043975" description="In dbSNP:rs1171942." evidence="3">
    <original>L</original>
    <variation>P</variation>
    <location>
        <position position="172"/>
    </location>
</feature>
<feature type="sequence conflict" description="In Ref. 1; AAC62086." evidence="4" ref="1">
    <original>L</original>
    <variation>V</variation>
    <location>
        <position position="99"/>
    </location>
</feature>
<feature type="sequence conflict" description="In Ref. 1; AAC62086." evidence="4" ref="1">
    <original>K</original>
    <variation>KK</variation>
    <location>
        <position position="372"/>
    </location>
</feature>
<keyword id="KW-0325">Glycoprotein</keyword>
<keyword id="KW-0472">Membrane</keyword>
<keyword id="KW-1267">Proteomics identification</keyword>
<keyword id="KW-1185">Reference proteome</keyword>
<keyword id="KW-0812">Transmembrane</keyword>
<keyword id="KW-1133">Transmembrane helix</keyword>
<dbReference type="EMBL" id="AF087142">
    <property type="protein sequence ID" value="AAC62086.1"/>
    <property type="molecule type" value="mRNA"/>
</dbReference>
<dbReference type="EMBL" id="AL158069">
    <property type="status" value="NOT_ANNOTATED_CDS"/>
    <property type="molecule type" value="Genomic_DNA"/>
</dbReference>
<dbReference type="EMBL" id="CH471132">
    <property type="protein sequence ID" value="EAX05363.1"/>
    <property type="molecule type" value="Genomic_DNA"/>
</dbReference>
<dbReference type="EMBL" id="CH471132">
    <property type="protein sequence ID" value="EAX05364.1"/>
    <property type="molecule type" value="Genomic_DNA"/>
</dbReference>
<dbReference type="EMBL" id="BC136518">
    <property type="protein sequence ID" value="AAI36519.1"/>
    <property type="molecule type" value="mRNA"/>
</dbReference>
<dbReference type="EMBL" id="BC136519">
    <property type="protein sequence ID" value="AAI36520.1"/>
    <property type="molecule type" value="mRNA"/>
</dbReference>
<dbReference type="CCDS" id="CCDS35317.1"/>
<dbReference type="RefSeq" id="NP_056501.2">
    <property type="nucleotide sequence ID" value="NM_015686.3"/>
</dbReference>
<dbReference type="SMR" id="O75949"/>
<dbReference type="FunCoup" id="O75949">
    <property type="interactions" value="470"/>
</dbReference>
<dbReference type="STRING" id="9606.ENSP00000252338"/>
<dbReference type="GlyCosmos" id="O75949">
    <property type="glycosylation" value="2 sites, No reported glycans"/>
</dbReference>
<dbReference type="GlyGen" id="O75949">
    <property type="glycosylation" value="4 sites, 1 O-linked glycan (2 sites)"/>
</dbReference>
<dbReference type="iPTMnet" id="O75949"/>
<dbReference type="PhosphoSitePlus" id="O75949"/>
<dbReference type="BioMuta" id="FAM155B"/>
<dbReference type="MassIVE" id="O75949"/>
<dbReference type="PaxDb" id="9606-ENSP00000252338"/>
<dbReference type="PeptideAtlas" id="O75949"/>
<dbReference type="Antibodypedia" id="27337">
    <property type="antibodies" value="81 antibodies from 15 providers"/>
</dbReference>
<dbReference type="DNASU" id="27112"/>
<dbReference type="Ensembl" id="ENST00000252338.5">
    <property type="protein sequence ID" value="ENSP00000252338.5"/>
    <property type="gene ID" value="ENSG00000130054.5"/>
</dbReference>
<dbReference type="GeneID" id="27112"/>
<dbReference type="KEGG" id="hsa:27112"/>
<dbReference type="MANE-Select" id="ENST00000252338.5">
    <property type="protein sequence ID" value="ENSP00000252338.5"/>
    <property type="RefSeq nucleotide sequence ID" value="NM_015686.3"/>
    <property type="RefSeq protein sequence ID" value="NP_056501.2"/>
</dbReference>
<dbReference type="UCSC" id="uc004dxk.4">
    <property type="organism name" value="human"/>
</dbReference>
<dbReference type="AGR" id="HGNC:30701"/>
<dbReference type="CTD" id="27112"/>
<dbReference type="DisGeNET" id="27112"/>
<dbReference type="GeneCards" id="NALF2"/>
<dbReference type="HGNC" id="HGNC:30701">
    <property type="gene designation" value="NALF2"/>
</dbReference>
<dbReference type="HPA" id="ENSG00000130054">
    <property type="expression patterns" value="Tissue enriched (heart)"/>
</dbReference>
<dbReference type="neXtProt" id="NX_O75949"/>
<dbReference type="OpenTargets" id="ENSG00000130054"/>
<dbReference type="VEuPathDB" id="HostDB:ENSG00000130054"/>
<dbReference type="eggNOG" id="ENOG502QQKW">
    <property type="taxonomic scope" value="Eukaryota"/>
</dbReference>
<dbReference type="GeneTree" id="ENSGT00940000161362"/>
<dbReference type="HOGENOM" id="CLU_058453_0_0_1"/>
<dbReference type="InParanoid" id="O75949"/>
<dbReference type="OMA" id="QWVSCEA"/>
<dbReference type="OrthoDB" id="12815at9604"/>
<dbReference type="PAN-GO" id="O75949">
    <property type="GO annotations" value="3 GO annotations based on evolutionary models"/>
</dbReference>
<dbReference type="PhylomeDB" id="O75949"/>
<dbReference type="TreeFam" id="TF331752"/>
<dbReference type="PathwayCommons" id="O75949"/>
<dbReference type="BioGRID-ORCS" id="27112">
    <property type="hits" value="6 hits in 758 CRISPR screens"/>
</dbReference>
<dbReference type="ChiTaRS" id="FAM155B">
    <property type="organism name" value="human"/>
</dbReference>
<dbReference type="GenomeRNAi" id="27112"/>
<dbReference type="Pharos" id="O75949">
    <property type="development level" value="Tbio"/>
</dbReference>
<dbReference type="PRO" id="PR:O75949"/>
<dbReference type="Proteomes" id="UP000005640">
    <property type="component" value="Chromosome X"/>
</dbReference>
<dbReference type="RNAct" id="O75949">
    <property type="molecule type" value="protein"/>
</dbReference>
<dbReference type="Bgee" id="ENSG00000130054">
    <property type="expression patterns" value="Expressed in cardiac muscle of right atrium and 113 other cell types or tissues"/>
</dbReference>
<dbReference type="GO" id="GO:0005886">
    <property type="term" value="C:plasma membrane"/>
    <property type="evidence" value="ECO:0000318"/>
    <property type="project" value="GO_Central"/>
</dbReference>
<dbReference type="GO" id="GO:0098703">
    <property type="term" value="P:calcium ion import across plasma membrane"/>
    <property type="evidence" value="ECO:0000318"/>
    <property type="project" value="GO_Central"/>
</dbReference>
<dbReference type="InterPro" id="IPR055288">
    <property type="entry name" value="NALCN_aux_factor_1/2"/>
</dbReference>
<dbReference type="PANTHER" id="PTHR15819:SF8">
    <property type="entry name" value="NALCN CHANNEL AUXILIARY FACTOR 2"/>
    <property type="match status" value="1"/>
</dbReference>
<dbReference type="PANTHER" id="PTHR15819">
    <property type="entry name" value="TRANSMEMBRANE PROTEIN FAM155"/>
    <property type="match status" value="1"/>
</dbReference>
<accession>O75949</accession>
<accession>B1ALV6</accession>
<accession>B9EGK1</accession>
<accession>D3DVU1</accession>
<name>NALF2_HUMAN</name>